<proteinExistence type="inferred from homology"/>
<comment type="function">
    <text evidence="1">Catalyzes the four-electron oxidation of UDP-N-acetyl-D-mannosamine (UDP-ManNAc), reducing NAD(+) and releasing UDP-N-acetylmannosaminuronic acid (UDP-ManNAcA).</text>
</comment>
<comment type="catalytic activity">
    <reaction evidence="1">
        <text>UDP-N-acetyl-alpha-D-mannosamine + 2 NAD(+) + H2O = UDP-N-acetyl-alpha-D-mannosaminouronate + 2 NADH + 3 H(+)</text>
        <dbReference type="Rhea" id="RHEA:25780"/>
        <dbReference type="ChEBI" id="CHEBI:15377"/>
        <dbReference type="ChEBI" id="CHEBI:15378"/>
        <dbReference type="ChEBI" id="CHEBI:57540"/>
        <dbReference type="ChEBI" id="CHEBI:57945"/>
        <dbReference type="ChEBI" id="CHEBI:68623"/>
        <dbReference type="ChEBI" id="CHEBI:70731"/>
        <dbReference type="EC" id="1.1.1.336"/>
    </reaction>
</comment>
<comment type="pathway">
    <text evidence="1">Bacterial outer membrane biogenesis; enterobacterial common antigen biosynthesis.</text>
</comment>
<comment type="subunit">
    <text evidence="1">Homodimer.</text>
</comment>
<comment type="similarity">
    <text evidence="1">Belongs to the UDP-glucose/GDP-mannose dehydrogenase family. WecC subfamily.</text>
</comment>
<protein>
    <recommendedName>
        <fullName evidence="1">UDP-N-acetyl-D-mannosamine dehydrogenase</fullName>
        <ecNumber evidence="1">1.1.1.336</ecNumber>
    </recommendedName>
    <alternativeName>
        <fullName evidence="1">UDP-ManNAc 6-dehydrogenase</fullName>
    </alternativeName>
</protein>
<keyword id="KW-0520">NAD</keyword>
<keyword id="KW-0560">Oxidoreductase</keyword>
<dbReference type="EC" id="1.1.1.336" evidence="1"/>
<dbReference type="EMBL" id="AL513382">
    <property type="protein sequence ID" value="CAD09395.1"/>
    <property type="molecule type" value="Genomic_DNA"/>
</dbReference>
<dbReference type="EMBL" id="AE014613">
    <property type="protein sequence ID" value="AAO70900.1"/>
    <property type="molecule type" value="Genomic_DNA"/>
</dbReference>
<dbReference type="RefSeq" id="NP_457826.1">
    <property type="nucleotide sequence ID" value="NC_003198.1"/>
</dbReference>
<dbReference type="RefSeq" id="WP_000011236.1">
    <property type="nucleotide sequence ID" value="NZ_WSUR01000032.1"/>
</dbReference>
<dbReference type="SMR" id="Q8Z389"/>
<dbReference type="STRING" id="220341.gene:17587490"/>
<dbReference type="KEGG" id="stt:t3376"/>
<dbReference type="KEGG" id="sty:STY3634"/>
<dbReference type="PATRIC" id="fig|220341.7.peg.3703"/>
<dbReference type="eggNOG" id="COG0677">
    <property type="taxonomic scope" value="Bacteria"/>
</dbReference>
<dbReference type="HOGENOM" id="CLU_023810_3_2_6"/>
<dbReference type="OMA" id="IDPWFIV"/>
<dbReference type="OrthoDB" id="9803238at2"/>
<dbReference type="UniPathway" id="UPA00566"/>
<dbReference type="Proteomes" id="UP000000541">
    <property type="component" value="Chromosome"/>
</dbReference>
<dbReference type="Proteomes" id="UP000002670">
    <property type="component" value="Chromosome"/>
</dbReference>
<dbReference type="GO" id="GO:0051287">
    <property type="term" value="F:NAD binding"/>
    <property type="evidence" value="ECO:0007669"/>
    <property type="project" value="InterPro"/>
</dbReference>
<dbReference type="GO" id="GO:0016628">
    <property type="term" value="F:oxidoreductase activity, acting on the CH-CH group of donors, NAD or NADP as acceptor"/>
    <property type="evidence" value="ECO:0007669"/>
    <property type="project" value="InterPro"/>
</dbReference>
<dbReference type="GO" id="GO:0089714">
    <property type="term" value="F:UDP-N-acetyl-D-mannosamine dehydrogenase activity"/>
    <property type="evidence" value="ECO:0007669"/>
    <property type="project" value="UniProtKB-UniRule"/>
</dbReference>
<dbReference type="GO" id="GO:0009246">
    <property type="term" value="P:enterobacterial common antigen biosynthetic process"/>
    <property type="evidence" value="ECO:0007669"/>
    <property type="project" value="UniProtKB-UniRule"/>
</dbReference>
<dbReference type="FunFam" id="3.40.50.720:FF:000139">
    <property type="entry name" value="UDP-N-acetyl-D-mannosamine dehydrogenase"/>
    <property type="match status" value="1"/>
</dbReference>
<dbReference type="FunFam" id="3.40.50.720:FF:000235">
    <property type="entry name" value="UDP-N-acetyl-D-mannosamine dehydrogenase"/>
    <property type="match status" value="1"/>
</dbReference>
<dbReference type="Gene3D" id="1.20.5.100">
    <property type="entry name" value="Cytochrome c1, transmembrane anchor, C-terminal"/>
    <property type="match status" value="1"/>
</dbReference>
<dbReference type="Gene3D" id="3.40.50.720">
    <property type="entry name" value="NAD(P)-binding Rossmann-like Domain"/>
    <property type="match status" value="2"/>
</dbReference>
<dbReference type="HAMAP" id="MF_02029">
    <property type="entry name" value="WecC_RffD"/>
    <property type="match status" value="1"/>
</dbReference>
<dbReference type="InterPro" id="IPR008927">
    <property type="entry name" value="6-PGluconate_DH-like_C_sf"/>
</dbReference>
<dbReference type="InterPro" id="IPR036291">
    <property type="entry name" value="NAD(P)-bd_dom_sf"/>
</dbReference>
<dbReference type="InterPro" id="IPR017476">
    <property type="entry name" value="UDP-Glc/GDP-Man"/>
</dbReference>
<dbReference type="InterPro" id="IPR014027">
    <property type="entry name" value="UDP-Glc/GDP-Man_DH_C"/>
</dbReference>
<dbReference type="InterPro" id="IPR036220">
    <property type="entry name" value="UDP-Glc/GDP-Man_DH_C_sf"/>
</dbReference>
<dbReference type="InterPro" id="IPR014026">
    <property type="entry name" value="UDP-Glc/GDP-Man_DH_dimer"/>
</dbReference>
<dbReference type="InterPro" id="IPR001732">
    <property type="entry name" value="UDP-Glc/GDP-Man_DH_N"/>
</dbReference>
<dbReference type="InterPro" id="IPR028359">
    <property type="entry name" value="UDP_ManNAc/GlcNAc_DH"/>
</dbReference>
<dbReference type="InterPro" id="IPR032891">
    <property type="entry name" value="WecC"/>
</dbReference>
<dbReference type="NCBIfam" id="TIGR03026">
    <property type="entry name" value="NDP-sugDHase"/>
    <property type="match status" value="1"/>
</dbReference>
<dbReference type="NCBIfam" id="NF008286">
    <property type="entry name" value="PRK11064.1"/>
    <property type="match status" value="1"/>
</dbReference>
<dbReference type="PANTHER" id="PTHR43491">
    <property type="entry name" value="UDP-N-ACETYL-D-MANNOSAMINE DEHYDROGENASE"/>
    <property type="match status" value="1"/>
</dbReference>
<dbReference type="PANTHER" id="PTHR43491:SF1">
    <property type="entry name" value="UDP-N-ACETYL-D-MANNOSAMINE DEHYDROGENASE"/>
    <property type="match status" value="1"/>
</dbReference>
<dbReference type="Pfam" id="PF00984">
    <property type="entry name" value="UDPG_MGDP_dh"/>
    <property type="match status" value="1"/>
</dbReference>
<dbReference type="Pfam" id="PF03720">
    <property type="entry name" value="UDPG_MGDP_dh_C"/>
    <property type="match status" value="1"/>
</dbReference>
<dbReference type="Pfam" id="PF03721">
    <property type="entry name" value="UDPG_MGDP_dh_N"/>
    <property type="match status" value="1"/>
</dbReference>
<dbReference type="PIRSF" id="PIRSF500136">
    <property type="entry name" value="UDP_ManNAc_DH"/>
    <property type="match status" value="1"/>
</dbReference>
<dbReference type="PIRSF" id="PIRSF000124">
    <property type="entry name" value="UDPglc_GDPman_dh"/>
    <property type="match status" value="1"/>
</dbReference>
<dbReference type="SMART" id="SM00984">
    <property type="entry name" value="UDPG_MGDP_dh_C"/>
    <property type="match status" value="1"/>
</dbReference>
<dbReference type="SUPFAM" id="SSF48179">
    <property type="entry name" value="6-phosphogluconate dehydrogenase C-terminal domain-like"/>
    <property type="match status" value="1"/>
</dbReference>
<dbReference type="SUPFAM" id="SSF51735">
    <property type="entry name" value="NAD(P)-binding Rossmann-fold domains"/>
    <property type="match status" value="1"/>
</dbReference>
<dbReference type="SUPFAM" id="SSF52413">
    <property type="entry name" value="UDP-glucose/GDP-mannose dehydrogenase C-terminal domain"/>
    <property type="match status" value="1"/>
</dbReference>
<name>WECC_SALTI</name>
<reference key="1">
    <citation type="journal article" date="2001" name="Nature">
        <title>Complete genome sequence of a multiple drug resistant Salmonella enterica serovar Typhi CT18.</title>
        <authorList>
            <person name="Parkhill J."/>
            <person name="Dougan G."/>
            <person name="James K.D."/>
            <person name="Thomson N.R."/>
            <person name="Pickard D."/>
            <person name="Wain J."/>
            <person name="Churcher C.M."/>
            <person name="Mungall K.L."/>
            <person name="Bentley S.D."/>
            <person name="Holden M.T.G."/>
            <person name="Sebaihia M."/>
            <person name="Baker S."/>
            <person name="Basham D."/>
            <person name="Brooks K."/>
            <person name="Chillingworth T."/>
            <person name="Connerton P."/>
            <person name="Cronin A."/>
            <person name="Davis P."/>
            <person name="Davies R.M."/>
            <person name="Dowd L."/>
            <person name="White N."/>
            <person name="Farrar J."/>
            <person name="Feltwell T."/>
            <person name="Hamlin N."/>
            <person name="Haque A."/>
            <person name="Hien T.T."/>
            <person name="Holroyd S."/>
            <person name="Jagels K."/>
            <person name="Krogh A."/>
            <person name="Larsen T.S."/>
            <person name="Leather S."/>
            <person name="Moule S."/>
            <person name="O'Gaora P."/>
            <person name="Parry C."/>
            <person name="Quail M.A."/>
            <person name="Rutherford K.M."/>
            <person name="Simmonds M."/>
            <person name="Skelton J."/>
            <person name="Stevens K."/>
            <person name="Whitehead S."/>
            <person name="Barrell B.G."/>
        </authorList>
    </citation>
    <scope>NUCLEOTIDE SEQUENCE [LARGE SCALE GENOMIC DNA]</scope>
    <source>
        <strain>CT18</strain>
    </source>
</reference>
<reference key="2">
    <citation type="journal article" date="2003" name="J. Bacteriol.">
        <title>Comparative genomics of Salmonella enterica serovar Typhi strains Ty2 and CT18.</title>
        <authorList>
            <person name="Deng W."/>
            <person name="Liou S.-R."/>
            <person name="Plunkett G. III"/>
            <person name="Mayhew G.F."/>
            <person name="Rose D.J."/>
            <person name="Burland V."/>
            <person name="Kodoyianni V."/>
            <person name="Schwartz D.C."/>
            <person name="Blattner F.R."/>
        </authorList>
    </citation>
    <scope>NUCLEOTIDE SEQUENCE [LARGE SCALE GENOMIC DNA]</scope>
    <source>
        <strain>ATCC 700931 / Ty2</strain>
    </source>
</reference>
<accession>Q8Z389</accession>
<organism>
    <name type="scientific">Salmonella typhi</name>
    <dbReference type="NCBI Taxonomy" id="90370"/>
    <lineage>
        <taxon>Bacteria</taxon>
        <taxon>Pseudomonadati</taxon>
        <taxon>Pseudomonadota</taxon>
        <taxon>Gammaproteobacteria</taxon>
        <taxon>Enterobacterales</taxon>
        <taxon>Enterobacteriaceae</taxon>
        <taxon>Salmonella</taxon>
    </lineage>
</organism>
<feature type="chain" id="PRO_0000074079" description="UDP-N-acetyl-D-mannosamine dehydrogenase">
    <location>
        <begin position="1"/>
        <end position="420"/>
    </location>
</feature>
<feature type="active site" description="Proton donor/acceptor" evidence="1">
    <location>
        <position position="212"/>
    </location>
</feature>
<feature type="active site" description="Nucleophile" evidence="1">
    <location>
        <position position="266"/>
    </location>
</feature>
<feature type="binding site" description="in chain A" evidence="1">
    <location>
        <position position="13"/>
    </location>
    <ligand>
        <name>NAD(+)</name>
        <dbReference type="ChEBI" id="CHEBI:57540"/>
        <note>ligand shared between homodimeric partners</note>
    </ligand>
</feature>
<feature type="binding site" description="in chain A" evidence="1">
    <location>
        <position position="14"/>
    </location>
    <ligand>
        <name>NAD(+)</name>
        <dbReference type="ChEBI" id="CHEBI:57540"/>
        <note>ligand shared between homodimeric partners</note>
    </ligand>
</feature>
<feature type="binding site" description="in chain A" evidence="1">
    <location>
        <position position="33"/>
    </location>
    <ligand>
        <name>NAD(+)</name>
        <dbReference type="ChEBI" id="CHEBI:57540"/>
        <note>ligand shared between homodimeric partners</note>
    </ligand>
</feature>
<feature type="binding site" description="in chain A" evidence="1">
    <location>
        <position position="85"/>
    </location>
    <ligand>
        <name>NAD(+)</name>
        <dbReference type="ChEBI" id="CHEBI:57540"/>
        <note>ligand shared between homodimeric partners</note>
    </ligand>
</feature>
<feature type="binding site" description="in chain A" evidence="1">
    <location>
        <position position="126"/>
    </location>
    <ligand>
        <name>NAD(+)</name>
        <dbReference type="ChEBI" id="CHEBI:57540"/>
        <note>ligand shared between homodimeric partners</note>
    </ligand>
</feature>
<feature type="binding site" description="in chain A" evidence="1">
    <location>
        <position position="160"/>
    </location>
    <ligand>
        <name>UDP-N-acetyl-alpha-D-mannosaminouronate</name>
        <dbReference type="ChEBI" id="CHEBI:70731"/>
        <note>ligand shared between homodimeric partners</note>
    </ligand>
</feature>
<feature type="binding site" description="in chain A" evidence="1">
    <location>
        <position position="161"/>
    </location>
    <ligand>
        <name>UDP-N-acetyl-alpha-D-mannosaminouronate</name>
        <dbReference type="ChEBI" id="CHEBI:70731"/>
        <note>ligand shared between homodimeric partners</note>
    </ligand>
</feature>
<feature type="binding site" description="in chain A" evidence="1">
    <location>
        <position position="212"/>
    </location>
    <ligand>
        <name>UDP-N-acetyl-alpha-D-mannosaminouronate</name>
        <dbReference type="ChEBI" id="CHEBI:70731"/>
        <note>ligand shared between homodimeric partners</note>
    </ligand>
</feature>
<feature type="binding site" description="in chain A" evidence="1">
    <location>
        <position position="216"/>
    </location>
    <ligand>
        <name>UDP-N-acetyl-alpha-D-mannosaminouronate</name>
        <dbReference type="ChEBI" id="CHEBI:70731"/>
        <note>ligand shared between homodimeric partners</note>
    </ligand>
</feature>
<feature type="binding site" description="in chain A" evidence="1">
    <location>
        <position position="219"/>
    </location>
    <ligand>
        <name>UDP-N-acetyl-alpha-D-mannosaminouronate</name>
        <dbReference type="ChEBI" id="CHEBI:70731"/>
        <note>ligand shared between homodimeric partners</note>
    </ligand>
</feature>
<feature type="binding site" description="in chain B" evidence="1">
    <location>
        <position position="250"/>
    </location>
    <ligand>
        <name>UDP-N-acetyl-alpha-D-mannosaminouronate</name>
        <dbReference type="ChEBI" id="CHEBI:70731"/>
        <note>ligand shared between homodimeric partners</note>
    </ligand>
</feature>
<feature type="binding site" description="in chain B" evidence="1">
    <location>
        <position position="252"/>
    </location>
    <ligand>
        <name>UDP-N-acetyl-alpha-D-mannosaminouronate</name>
        <dbReference type="ChEBI" id="CHEBI:70731"/>
        <note>ligand shared between homodimeric partners</note>
    </ligand>
</feature>
<feature type="binding site" description="in chain A" evidence="1">
    <location>
        <position position="263"/>
    </location>
    <ligand>
        <name>UDP-N-acetyl-alpha-D-mannosaminouronate</name>
        <dbReference type="ChEBI" id="CHEBI:70731"/>
        <note>ligand shared between homodimeric partners</note>
    </ligand>
</feature>
<feature type="binding site" description="in chain A" evidence="1">
    <location>
        <position position="330"/>
    </location>
    <ligand>
        <name>UDP-N-acetyl-alpha-D-mannosaminouronate</name>
        <dbReference type="ChEBI" id="CHEBI:70731"/>
        <note>ligand shared between homodimeric partners</note>
    </ligand>
</feature>
<feature type="binding site" description="in chain A" evidence="1">
    <location>
        <position position="331"/>
    </location>
    <ligand>
        <name>UDP-N-acetyl-alpha-D-mannosaminouronate</name>
        <dbReference type="ChEBI" id="CHEBI:70731"/>
        <note>ligand shared between homodimeric partners</note>
    </ligand>
</feature>
<feature type="binding site" description="in chain B" evidence="1">
    <location>
        <position position="338"/>
    </location>
    <ligand>
        <name>NAD(+)</name>
        <dbReference type="ChEBI" id="CHEBI:57540"/>
        <note>ligand shared between homodimeric partners</note>
    </ligand>
</feature>
<feature type="binding site" description="in chain A" evidence="1">
    <location>
        <position position="416"/>
    </location>
    <ligand>
        <name>UDP-N-acetyl-alpha-D-mannosaminouronate</name>
        <dbReference type="ChEBI" id="CHEBI:70731"/>
        <note>ligand shared between homodimeric partners</note>
    </ligand>
</feature>
<evidence type="ECO:0000255" key="1">
    <source>
        <dbReference type="HAMAP-Rule" id="MF_02029"/>
    </source>
</evidence>
<gene>
    <name evidence="1" type="primary">wecC</name>
    <name type="synonym">rffD</name>
    <name type="ordered locus">STY3634</name>
    <name type="ordered locus">t3376</name>
</gene>
<sequence>MSFTTISVIGLGYIGLPTAAAFASRQKQVIGVDINQHAVDTINRGEIHIVEPALGNVVKMAVEGGFLRATTTPVEADAYLIAVPTPFKGDHDPDMAYVEAAAKSIAPVLKKGALVILESTSPVGATEQMAGWLAGMRPDLTFPQQAGEQADVNIAYCPERVLPGQVMVELIKNDRVIGGMTPVCSARASALYKIFLEGECVVTNSRTAEMCKLTENSFRDVNIAFANELSLICAEQGINVWELIRLANRHPRVNILQPGPGVGGHCIAVDPWFIVAQNPQQARLIRTAREVNDGKPHWVVDQVKAAVADCLAATDKRASEVKIACFGLAFKPNIDDLRESPAMGIAQSIARWHSGETLVVEPNIRQLPKKLDGLCTLAKLDAALAAADVLVMLVDHDEFKAIPGDAVHQRYVVDTKGVWR</sequence>